<proteinExistence type="inferred from homology"/>
<name>DAPA_NITV9</name>
<gene>
    <name evidence="1" type="primary">dapA</name>
    <name type="ordered locus">DvMF_0562</name>
</gene>
<accession>B8DKU0</accession>
<organism>
    <name type="scientific">Nitratidesulfovibrio vulgaris (strain DSM 19637 / Miyazaki F)</name>
    <name type="common">Desulfovibrio vulgaris</name>
    <dbReference type="NCBI Taxonomy" id="883"/>
    <lineage>
        <taxon>Bacteria</taxon>
        <taxon>Pseudomonadati</taxon>
        <taxon>Thermodesulfobacteriota</taxon>
        <taxon>Desulfovibrionia</taxon>
        <taxon>Desulfovibrionales</taxon>
        <taxon>Desulfovibrionaceae</taxon>
        <taxon>Nitratidesulfovibrio</taxon>
    </lineage>
</organism>
<evidence type="ECO:0000255" key="1">
    <source>
        <dbReference type="HAMAP-Rule" id="MF_00418"/>
    </source>
</evidence>
<evidence type="ECO:0000305" key="2"/>
<dbReference type="EC" id="4.3.3.7" evidence="1"/>
<dbReference type="EMBL" id="CP001197">
    <property type="protein sequence ID" value="ACL07519.1"/>
    <property type="molecule type" value="Genomic_DNA"/>
</dbReference>
<dbReference type="SMR" id="B8DKU0"/>
<dbReference type="STRING" id="883.DvMF_0562"/>
<dbReference type="KEGG" id="dvm:DvMF_0562"/>
<dbReference type="eggNOG" id="COG0329">
    <property type="taxonomic scope" value="Bacteria"/>
</dbReference>
<dbReference type="HOGENOM" id="CLU_049343_7_1_7"/>
<dbReference type="OrthoDB" id="9782828at2"/>
<dbReference type="UniPathway" id="UPA00034">
    <property type="reaction ID" value="UER00017"/>
</dbReference>
<dbReference type="GO" id="GO:0005829">
    <property type="term" value="C:cytosol"/>
    <property type="evidence" value="ECO:0007669"/>
    <property type="project" value="TreeGrafter"/>
</dbReference>
<dbReference type="GO" id="GO:0008840">
    <property type="term" value="F:4-hydroxy-tetrahydrodipicolinate synthase activity"/>
    <property type="evidence" value="ECO:0007669"/>
    <property type="project" value="UniProtKB-UniRule"/>
</dbReference>
<dbReference type="GO" id="GO:0019877">
    <property type="term" value="P:diaminopimelate biosynthetic process"/>
    <property type="evidence" value="ECO:0007669"/>
    <property type="project" value="UniProtKB-UniRule"/>
</dbReference>
<dbReference type="GO" id="GO:0009089">
    <property type="term" value="P:lysine biosynthetic process via diaminopimelate"/>
    <property type="evidence" value="ECO:0007669"/>
    <property type="project" value="UniProtKB-UniRule"/>
</dbReference>
<dbReference type="CDD" id="cd00950">
    <property type="entry name" value="DHDPS"/>
    <property type="match status" value="1"/>
</dbReference>
<dbReference type="Gene3D" id="3.20.20.70">
    <property type="entry name" value="Aldolase class I"/>
    <property type="match status" value="1"/>
</dbReference>
<dbReference type="HAMAP" id="MF_00418">
    <property type="entry name" value="DapA"/>
    <property type="match status" value="1"/>
</dbReference>
<dbReference type="InterPro" id="IPR013785">
    <property type="entry name" value="Aldolase_TIM"/>
</dbReference>
<dbReference type="InterPro" id="IPR005263">
    <property type="entry name" value="DapA"/>
</dbReference>
<dbReference type="InterPro" id="IPR002220">
    <property type="entry name" value="DapA-like"/>
</dbReference>
<dbReference type="InterPro" id="IPR020625">
    <property type="entry name" value="Schiff_base-form_aldolases_AS"/>
</dbReference>
<dbReference type="InterPro" id="IPR020624">
    <property type="entry name" value="Schiff_base-form_aldolases_CS"/>
</dbReference>
<dbReference type="NCBIfam" id="TIGR00674">
    <property type="entry name" value="dapA"/>
    <property type="match status" value="1"/>
</dbReference>
<dbReference type="PANTHER" id="PTHR12128:SF66">
    <property type="entry name" value="4-HYDROXY-2-OXOGLUTARATE ALDOLASE, MITOCHONDRIAL"/>
    <property type="match status" value="1"/>
</dbReference>
<dbReference type="PANTHER" id="PTHR12128">
    <property type="entry name" value="DIHYDRODIPICOLINATE SYNTHASE"/>
    <property type="match status" value="1"/>
</dbReference>
<dbReference type="Pfam" id="PF00701">
    <property type="entry name" value="DHDPS"/>
    <property type="match status" value="1"/>
</dbReference>
<dbReference type="PIRSF" id="PIRSF001365">
    <property type="entry name" value="DHDPS"/>
    <property type="match status" value="1"/>
</dbReference>
<dbReference type="PRINTS" id="PR00146">
    <property type="entry name" value="DHPICSNTHASE"/>
</dbReference>
<dbReference type="SMART" id="SM01130">
    <property type="entry name" value="DHDPS"/>
    <property type="match status" value="1"/>
</dbReference>
<dbReference type="SUPFAM" id="SSF51569">
    <property type="entry name" value="Aldolase"/>
    <property type="match status" value="1"/>
</dbReference>
<dbReference type="PROSITE" id="PS00665">
    <property type="entry name" value="DHDPS_1"/>
    <property type="match status" value="1"/>
</dbReference>
<dbReference type="PROSITE" id="PS00666">
    <property type="entry name" value="DHDPS_2"/>
    <property type="match status" value="1"/>
</dbReference>
<feature type="chain" id="PRO_1000124027" description="4-hydroxy-tetrahydrodipicolinate synthase">
    <location>
        <begin position="1"/>
        <end position="292"/>
    </location>
</feature>
<feature type="active site" description="Proton donor/acceptor" evidence="1">
    <location>
        <position position="133"/>
    </location>
</feature>
<feature type="active site" description="Schiff-base intermediate with substrate" evidence="1">
    <location>
        <position position="162"/>
    </location>
</feature>
<feature type="binding site" evidence="1">
    <location>
        <position position="45"/>
    </location>
    <ligand>
        <name>pyruvate</name>
        <dbReference type="ChEBI" id="CHEBI:15361"/>
    </ligand>
</feature>
<feature type="binding site" evidence="1">
    <location>
        <position position="204"/>
    </location>
    <ligand>
        <name>pyruvate</name>
        <dbReference type="ChEBI" id="CHEBI:15361"/>
    </ligand>
</feature>
<feature type="site" description="Part of a proton relay during catalysis" evidence="1">
    <location>
        <position position="44"/>
    </location>
</feature>
<feature type="site" description="Part of a proton relay during catalysis" evidence="1">
    <location>
        <position position="107"/>
    </location>
</feature>
<sequence length="292" mass="31878">MQFQGAFTALVTPFRNGEVDEERYRALVEWQIEQGINGLVPCGTTGESATLTHQEHKDVIRICVEQVKGRVPVLAGAGSNNTREAVELTRYAKQAGADGALLITPYYNKPTQEGLYQHFKAIAAEVPMPFIVYNVPSRTGTNLCPETLARMKRDIPEVIGVKEATGNLIQVSEIIEYCGADFQVLSGDDFTVLPLLAVGGCGVISVSSNVVPAKMSELCRAFFEGDLATARRVHYEIASINRAMFLETNPIPVKTALSMMGRIELELRLPMVPLQPANQSRLRDILSAAGIV</sequence>
<keyword id="KW-0028">Amino-acid biosynthesis</keyword>
<keyword id="KW-0963">Cytoplasm</keyword>
<keyword id="KW-0220">Diaminopimelate biosynthesis</keyword>
<keyword id="KW-0456">Lyase</keyword>
<keyword id="KW-0457">Lysine biosynthesis</keyword>
<keyword id="KW-0704">Schiff base</keyword>
<protein>
    <recommendedName>
        <fullName evidence="1">4-hydroxy-tetrahydrodipicolinate synthase</fullName>
        <shortName evidence="1">HTPA synthase</shortName>
        <ecNumber evidence="1">4.3.3.7</ecNumber>
    </recommendedName>
</protein>
<reference key="1">
    <citation type="submission" date="2008-10" db="EMBL/GenBank/DDBJ databases">
        <title>Complete sequence of Desulfovibrio vulgaris str. 'Miyazaki F'.</title>
        <authorList>
            <person name="Lucas S."/>
            <person name="Copeland A."/>
            <person name="Lapidus A."/>
            <person name="Glavina del Rio T."/>
            <person name="Dalin E."/>
            <person name="Tice H."/>
            <person name="Bruce D."/>
            <person name="Goodwin L."/>
            <person name="Pitluck S."/>
            <person name="Sims D."/>
            <person name="Brettin T."/>
            <person name="Detter J.C."/>
            <person name="Han C."/>
            <person name="Larimer F."/>
            <person name="Land M."/>
            <person name="Hauser L."/>
            <person name="Kyrpides N."/>
            <person name="Mikhailova N."/>
            <person name="Hazen T.C."/>
            <person name="Richardson P."/>
        </authorList>
    </citation>
    <scope>NUCLEOTIDE SEQUENCE [LARGE SCALE GENOMIC DNA]</scope>
    <source>
        <strain>DSM 19637 / Miyazaki F</strain>
    </source>
</reference>
<comment type="function">
    <text evidence="1">Catalyzes the condensation of (S)-aspartate-beta-semialdehyde [(S)-ASA] and pyruvate to 4-hydroxy-tetrahydrodipicolinate (HTPA).</text>
</comment>
<comment type="catalytic activity">
    <reaction evidence="1">
        <text>L-aspartate 4-semialdehyde + pyruvate = (2S,4S)-4-hydroxy-2,3,4,5-tetrahydrodipicolinate + H2O + H(+)</text>
        <dbReference type="Rhea" id="RHEA:34171"/>
        <dbReference type="ChEBI" id="CHEBI:15361"/>
        <dbReference type="ChEBI" id="CHEBI:15377"/>
        <dbReference type="ChEBI" id="CHEBI:15378"/>
        <dbReference type="ChEBI" id="CHEBI:67139"/>
        <dbReference type="ChEBI" id="CHEBI:537519"/>
        <dbReference type="EC" id="4.3.3.7"/>
    </reaction>
</comment>
<comment type="pathway">
    <text evidence="1">Amino-acid biosynthesis; L-lysine biosynthesis via DAP pathway; (S)-tetrahydrodipicolinate from L-aspartate: step 3/4.</text>
</comment>
<comment type="subunit">
    <text evidence="1">Homotetramer; dimer of dimers.</text>
</comment>
<comment type="subcellular location">
    <subcellularLocation>
        <location evidence="1">Cytoplasm</location>
    </subcellularLocation>
</comment>
<comment type="similarity">
    <text evidence="1">Belongs to the DapA family.</text>
</comment>
<comment type="caution">
    <text evidence="2">Was originally thought to be a dihydrodipicolinate synthase (DHDPS), catalyzing the condensation of (S)-aspartate-beta-semialdehyde [(S)-ASA] and pyruvate to dihydrodipicolinate (DHDP). However, it was shown in E.coli that the product of the enzymatic reaction is not dihydrodipicolinate but in fact (4S)-4-hydroxy-2,3,4,5-tetrahydro-(2S)-dipicolinic acid (HTPA), and that the consecutive dehydration reaction leading to DHDP is not spontaneous but catalyzed by DapB.</text>
</comment>